<accession>B8I598</accession>
<evidence type="ECO:0000255" key="1">
    <source>
        <dbReference type="HAMAP-Rule" id="MF_01227"/>
    </source>
</evidence>
<sequence>MSVKYIFVTGGVVSGLGKGITAASLGRLLKARGVHVTIQKFDPYINVDPGTMSPYQHGEVFVTEDGAETDLDLGHYERFIDENLSKNSNITTGKIYWSVISKERKGDYLGGTVQVIPHITNEIKDRIYRVGKSERTDVVITEIGGTVGDIESLPFLESIRQVSNEVGRENVMYIHVTLVPYLGISGELKTKPTQHSVKELRSIGIQPDVIVCRTEKYLSQDMKEKLSLFCNVPEGAVVQNLDAEVLYEVPLMLEKEGLAKIVCKRLGLECKEPDLDEWEEMVRRQKNPKSSVTIGLVGKYVELHDAYLSVAESLRHGGIGNDVEVDIRWVNSEEIENGEVNSFLQGVDGILVPGGFGDRGIEGKINAITFARENKIPFFGICLGMQMAVVEFARNVAGLHDANSSEFGETPYPVIDLMPEQREVDEMGGTMRLGVYPCKINENTLIKGIFEDELIYERHRHRYEFNNEFRDTFIKNGMTLSGLSPSGKLVETIELKDHPWFVGVQFHPEFKSRPNKPHPLFKDFVRAAYEYKTK</sequence>
<dbReference type="EC" id="6.3.4.2" evidence="1"/>
<dbReference type="EMBL" id="CP001348">
    <property type="protein sequence ID" value="ACL74678.1"/>
    <property type="molecule type" value="Genomic_DNA"/>
</dbReference>
<dbReference type="RefSeq" id="WP_012634743.1">
    <property type="nucleotide sequence ID" value="NC_011898.1"/>
</dbReference>
<dbReference type="SMR" id="B8I598"/>
<dbReference type="STRING" id="394503.Ccel_0291"/>
<dbReference type="MEROPS" id="C26.964"/>
<dbReference type="KEGG" id="cce:Ccel_0291"/>
<dbReference type="eggNOG" id="COG0504">
    <property type="taxonomic scope" value="Bacteria"/>
</dbReference>
<dbReference type="HOGENOM" id="CLU_011675_5_0_9"/>
<dbReference type="OrthoDB" id="9801107at2"/>
<dbReference type="UniPathway" id="UPA00159">
    <property type="reaction ID" value="UER00277"/>
</dbReference>
<dbReference type="Proteomes" id="UP000001349">
    <property type="component" value="Chromosome"/>
</dbReference>
<dbReference type="GO" id="GO:0005829">
    <property type="term" value="C:cytosol"/>
    <property type="evidence" value="ECO:0007669"/>
    <property type="project" value="TreeGrafter"/>
</dbReference>
<dbReference type="GO" id="GO:0005524">
    <property type="term" value="F:ATP binding"/>
    <property type="evidence" value="ECO:0007669"/>
    <property type="project" value="UniProtKB-KW"/>
</dbReference>
<dbReference type="GO" id="GO:0003883">
    <property type="term" value="F:CTP synthase activity"/>
    <property type="evidence" value="ECO:0007669"/>
    <property type="project" value="UniProtKB-UniRule"/>
</dbReference>
<dbReference type="GO" id="GO:0004359">
    <property type="term" value="F:glutaminase activity"/>
    <property type="evidence" value="ECO:0007669"/>
    <property type="project" value="RHEA"/>
</dbReference>
<dbReference type="GO" id="GO:0042802">
    <property type="term" value="F:identical protein binding"/>
    <property type="evidence" value="ECO:0007669"/>
    <property type="project" value="TreeGrafter"/>
</dbReference>
<dbReference type="GO" id="GO:0046872">
    <property type="term" value="F:metal ion binding"/>
    <property type="evidence" value="ECO:0007669"/>
    <property type="project" value="UniProtKB-KW"/>
</dbReference>
<dbReference type="GO" id="GO:0044210">
    <property type="term" value="P:'de novo' CTP biosynthetic process"/>
    <property type="evidence" value="ECO:0007669"/>
    <property type="project" value="UniProtKB-UniRule"/>
</dbReference>
<dbReference type="GO" id="GO:0019856">
    <property type="term" value="P:pyrimidine nucleobase biosynthetic process"/>
    <property type="evidence" value="ECO:0007669"/>
    <property type="project" value="TreeGrafter"/>
</dbReference>
<dbReference type="CDD" id="cd03113">
    <property type="entry name" value="CTPS_N"/>
    <property type="match status" value="1"/>
</dbReference>
<dbReference type="CDD" id="cd01746">
    <property type="entry name" value="GATase1_CTP_Synthase"/>
    <property type="match status" value="1"/>
</dbReference>
<dbReference type="FunFam" id="3.40.50.300:FF:000009">
    <property type="entry name" value="CTP synthase"/>
    <property type="match status" value="1"/>
</dbReference>
<dbReference type="FunFam" id="3.40.50.880:FF:000002">
    <property type="entry name" value="CTP synthase"/>
    <property type="match status" value="1"/>
</dbReference>
<dbReference type="Gene3D" id="3.40.50.880">
    <property type="match status" value="1"/>
</dbReference>
<dbReference type="Gene3D" id="3.40.50.300">
    <property type="entry name" value="P-loop containing nucleotide triphosphate hydrolases"/>
    <property type="match status" value="1"/>
</dbReference>
<dbReference type="HAMAP" id="MF_01227">
    <property type="entry name" value="PyrG"/>
    <property type="match status" value="1"/>
</dbReference>
<dbReference type="InterPro" id="IPR029062">
    <property type="entry name" value="Class_I_gatase-like"/>
</dbReference>
<dbReference type="InterPro" id="IPR004468">
    <property type="entry name" value="CTP_synthase"/>
</dbReference>
<dbReference type="InterPro" id="IPR017456">
    <property type="entry name" value="CTP_synthase_N"/>
</dbReference>
<dbReference type="InterPro" id="IPR017926">
    <property type="entry name" value="GATASE"/>
</dbReference>
<dbReference type="InterPro" id="IPR033828">
    <property type="entry name" value="GATase1_CTP_Synthase"/>
</dbReference>
<dbReference type="InterPro" id="IPR027417">
    <property type="entry name" value="P-loop_NTPase"/>
</dbReference>
<dbReference type="NCBIfam" id="NF003792">
    <property type="entry name" value="PRK05380.1"/>
    <property type="match status" value="1"/>
</dbReference>
<dbReference type="NCBIfam" id="TIGR00337">
    <property type="entry name" value="PyrG"/>
    <property type="match status" value="1"/>
</dbReference>
<dbReference type="PANTHER" id="PTHR11550">
    <property type="entry name" value="CTP SYNTHASE"/>
    <property type="match status" value="1"/>
</dbReference>
<dbReference type="PANTHER" id="PTHR11550:SF0">
    <property type="entry name" value="CTP SYNTHASE-RELATED"/>
    <property type="match status" value="1"/>
</dbReference>
<dbReference type="Pfam" id="PF06418">
    <property type="entry name" value="CTP_synth_N"/>
    <property type="match status" value="1"/>
</dbReference>
<dbReference type="Pfam" id="PF00117">
    <property type="entry name" value="GATase"/>
    <property type="match status" value="1"/>
</dbReference>
<dbReference type="SUPFAM" id="SSF52317">
    <property type="entry name" value="Class I glutamine amidotransferase-like"/>
    <property type="match status" value="1"/>
</dbReference>
<dbReference type="SUPFAM" id="SSF52540">
    <property type="entry name" value="P-loop containing nucleoside triphosphate hydrolases"/>
    <property type="match status" value="1"/>
</dbReference>
<dbReference type="PROSITE" id="PS51273">
    <property type="entry name" value="GATASE_TYPE_1"/>
    <property type="match status" value="1"/>
</dbReference>
<reference key="1">
    <citation type="submission" date="2009-01" db="EMBL/GenBank/DDBJ databases">
        <title>Complete sequence of Clostridium cellulolyticum H10.</title>
        <authorList>
            <consortium name="US DOE Joint Genome Institute"/>
            <person name="Lucas S."/>
            <person name="Copeland A."/>
            <person name="Lapidus A."/>
            <person name="Glavina del Rio T."/>
            <person name="Dalin E."/>
            <person name="Tice H."/>
            <person name="Bruce D."/>
            <person name="Goodwin L."/>
            <person name="Pitluck S."/>
            <person name="Chertkov O."/>
            <person name="Saunders E."/>
            <person name="Brettin T."/>
            <person name="Detter J.C."/>
            <person name="Han C."/>
            <person name="Larimer F."/>
            <person name="Land M."/>
            <person name="Hauser L."/>
            <person name="Kyrpides N."/>
            <person name="Ivanova N."/>
            <person name="Zhou J."/>
            <person name="Richardson P."/>
        </authorList>
    </citation>
    <scope>NUCLEOTIDE SEQUENCE [LARGE SCALE GENOMIC DNA]</scope>
    <source>
        <strain>ATCC 35319 / DSM 5812 / JCM 6584 / H10</strain>
    </source>
</reference>
<comment type="function">
    <text evidence="1">Catalyzes the ATP-dependent amination of UTP to CTP with either L-glutamine or ammonia as the source of nitrogen. Regulates intracellular CTP levels through interactions with the four ribonucleotide triphosphates.</text>
</comment>
<comment type="catalytic activity">
    <reaction evidence="1">
        <text>UTP + L-glutamine + ATP + H2O = CTP + L-glutamate + ADP + phosphate + 2 H(+)</text>
        <dbReference type="Rhea" id="RHEA:26426"/>
        <dbReference type="ChEBI" id="CHEBI:15377"/>
        <dbReference type="ChEBI" id="CHEBI:15378"/>
        <dbReference type="ChEBI" id="CHEBI:29985"/>
        <dbReference type="ChEBI" id="CHEBI:30616"/>
        <dbReference type="ChEBI" id="CHEBI:37563"/>
        <dbReference type="ChEBI" id="CHEBI:43474"/>
        <dbReference type="ChEBI" id="CHEBI:46398"/>
        <dbReference type="ChEBI" id="CHEBI:58359"/>
        <dbReference type="ChEBI" id="CHEBI:456216"/>
        <dbReference type="EC" id="6.3.4.2"/>
    </reaction>
</comment>
<comment type="catalytic activity">
    <reaction evidence="1">
        <text>L-glutamine + H2O = L-glutamate + NH4(+)</text>
        <dbReference type="Rhea" id="RHEA:15889"/>
        <dbReference type="ChEBI" id="CHEBI:15377"/>
        <dbReference type="ChEBI" id="CHEBI:28938"/>
        <dbReference type="ChEBI" id="CHEBI:29985"/>
        <dbReference type="ChEBI" id="CHEBI:58359"/>
    </reaction>
</comment>
<comment type="catalytic activity">
    <reaction evidence="1">
        <text>UTP + NH4(+) + ATP = CTP + ADP + phosphate + 2 H(+)</text>
        <dbReference type="Rhea" id="RHEA:16597"/>
        <dbReference type="ChEBI" id="CHEBI:15378"/>
        <dbReference type="ChEBI" id="CHEBI:28938"/>
        <dbReference type="ChEBI" id="CHEBI:30616"/>
        <dbReference type="ChEBI" id="CHEBI:37563"/>
        <dbReference type="ChEBI" id="CHEBI:43474"/>
        <dbReference type="ChEBI" id="CHEBI:46398"/>
        <dbReference type="ChEBI" id="CHEBI:456216"/>
    </reaction>
</comment>
<comment type="activity regulation">
    <text evidence="1">Allosterically activated by GTP, when glutamine is the substrate; GTP has no effect on the reaction when ammonia is the substrate. The allosteric effector GTP functions by stabilizing the protein conformation that binds the tetrahedral intermediate(s) formed during glutamine hydrolysis. Inhibited by the product CTP, via allosteric rather than competitive inhibition.</text>
</comment>
<comment type="pathway">
    <text evidence="1">Pyrimidine metabolism; CTP biosynthesis via de novo pathway; CTP from UDP: step 2/2.</text>
</comment>
<comment type="subunit">
    <text evidence="1">Homotetramer.</text>
</comment>
<comment type="miscellaneous">
    <text evidence="1">CTPSs have evolved a hybrid strategy for distinguishing between UTP and CTP. The overlapping regions of the product feedback inhibitory and substrate sites recognize a common feature in both compounds, the triphosphate moiety. To differentiate isosteric substrate and product pyrimidine rings, an additional pocket far from the expected kinase/ligase catalytic site, specifically recognizes the cytosine and ribose portions of the product inhibitor.</text>
</comment>
<comment type="similarity">
    <text evidence="1">Belongs to the CTP synthase family.</text>
</comment>
<gene>
    <name evidence="1" type="primary">pyrG</name>
    <name type="ordered locus">Ccel_0291</name>
</gene>
<name>PYRG_RUMCH</name>
<proteinExistence type="inferred from homology"/>
<organism>
    <name type="scientific">Ruminiclostridium cellulolyticum (strain ATCC 35319 / DSM 5812 / JCM 6584 / H10)</name>
    <name type="common">Clostridium cellulolyticum</name>
    <dbReference type="NCBI Taxonomy" id="394503"/>
    <lineage>
        <taxon>Bacteria</taxon>
        <taxon>Bacillati</taxon>
        <taxon>Bacillota</taxon>
        <taxon>Clostridia</taxon>
        <taxon>Eubacteriales</taxon>
        <taxon>Oscillospiraceae</taxon>
        <taxon>Ruminiclostridium</taxon>
    </lineage>
</organism>
<feature type="chain" id="PRO_1000164936" description="CTP synthase">
    <location>
        <begin position="1"/>
        <end position="534"/>
    </location>
</feature>
<feature type="domain" description="Glutamine amidotransferase type-1" evidence="1">
    <location>
        <begin position="293"/>
        <end position="534"/>
    </location>
</feature>
<feature type="region of interest" description="Amidoligase domain" evidence="1">
    <location>
        <begin position="1"/>
        <end position="268"/>
    </location>
</feature>
<feature type="active site" description="Nucleophile; for glutamine hydrolysis" evidence="1">
    <location>
        <position position="382"/>
    </location>
</feature>
<feature type="active site" evidence="1">
    <location>
        <position position="507"/>
    </location>
</feature>
<feature type="active site" evidence="1">
    <location>
        <position position="509"/>
    </location>
</feature>
<feature type="binding site" evidence="1">
    <location>
        <position position="14"/>
    </location>
    <ligand>
        <name>CTP</name>
        <dbReference type="ChEBI" id="CHEBI:37563"/>
        <note>allosteric inhibitor</note>
    </ligand>
</feature>
<feature type="binding site" evidence="1">
    <location>
        <position position="14"/>
    </location>
    <ligand>
        <name>UTP</name>
        <dbReference type="ChEBI" id="CHEBI:46398"/>
    </ligand>
</feature>
<feature type="binding site" evidence="1">
    <location>
        <begin position="15"/>
        <end position="20"/>
    </location>
    <ligand>
        <name>ATP</name>
        <dbReference type="ChEBI" id="CHEBI:30616"/>
    </ligand>
</feature>
<feature type="binding site" evidence="1">
    <location>
        <position position="55"/>
    </location>
    <ligand>
        <name>L-glutamine</name>
        <dbReference type="ChEBI" id="CHEBI:58359"/>
    </ligand>
</feature>
<feature type="binding site" evidence="1">
    <location>
        <position position="72"/>
    </location>
    <ligand>
        <name>ATP</name>
        <dbReference type="ChEBI" id="CHEBI:30616"/>
    </ligand>
</feature>
<feature type="binding site" evidence="1">
    <location>
        <position position="72"/>
    </location>
    <ligand>
        <name>Mg(2+)</name>
        <dbReference type="ChEBI" id="CHEBI:18420"/>
    </ligand>
</feature>
<feature type="binding site" evidence="1">
    <location>
        <position position="142"/>
    </location>
    <ligand>
        <name>Mg(2+)</name>
        <dbReference type="ChEBI" id="CHEBI:18420"/>
    </ligand>
</feature>
<feature type="binding site" evidence="1">
    <location>
        <begin position="149"/>
        <end position="151"/>
    </location>
    <ligand>
        <name>CTP</name>
        <dbReference type="ChEBI" id="CHEBI:37563"/>
        <note>allosteric inhibitor</note>
    </ligand>
</feature>
<feature type="binding site" evidence="1">
    <location>
        <begin position="189"/>
        <end position="194"/>
    </location>
    <ligand>
        <name>CTP</name>
        <dbReference type="ChEBI" id="CHEBI:37563"/>
        <note>allosteric inhibitor</note>
    </ligand>
</feature>
<feature type="binding site" evidence="1">
    <location>
        <begin position="189"/>
        <end position="194"/>
    </location>
    <ligand>
        <name>UTP</name>
        <dbReference type="ChEBI" id="CHEBI:46398"/>
    </ligand>
</feature>
<feature type="binding site" evidence="1">
    <location>
        <position position="225"/>
    </location>
    <ligand>
        <name>CTP</name>
        <dbReference type="ChEBI" id="CHEBI:37563"/>
        <note>allosteric inhibitor</note>
    </ligand>
</feature>
<feature type="binding site" evidence="1">
    <location>
        <position position="225"/>
    </location>
    <ligand>
        <name>UTP</name>
        <dbReference type="ChEBI" id="CHEBI:46398"/>
    </ligand>
</feature>
<feature type="binding site" evidence="1">
    <location>
        <position position="355"/>
    </location>
    <ligand>
        <name>L-glutamine</name>
        <dbReference type="ChEBI" id="CHEBI:58359"/>
    </ligand>
</feature>
<feature type="binding site" evidence="1">
    <location>
        <begin position="383"/>
        <end position="386"/>
    </location>
    <ligand>
        <name>L-glutamine</name>
        <dbReference type="ChEBI" id="CHEBI:58359"/>
    </ligand>
</feature>
<feature type="binding site" evidence="1">
    <location>
        <position position="406"/>
    </location>
    <ligand>
        <name>L-glutamine</name>
        <dbReference type="ChEBI" id="CHEBI:58359"/>
    </ligand>
</feature>
<feature type="binding site" evidence="1">
    <location>
        <position position="462"/>
    </location>
    <ligand>
        <name>L-glutamine</name>
        <dbReference type="ChEBI" id="CHEBI:58359"/>
    </ligand>
</feature>
<protein>
    <recommendedName>
        <fullName evidence="1">CTP synthase</fullName>
        <ecNumber evidence="1">6.3.4.2</ecNumber>
    </recommendedName>
    <alternativeName>
        <fullName evidence="1">Cytidine 5'-triphosphate synthase</fullName>
    </alternativeName>
    <alternativeName>
        <fullName evidence="1">Cytidine triphosphate synthetase</fullName>
        <shortName evidence="1">CTP synthetase</shortName>
        <shortName evidence="1">CTPS</shortName>
    </alternativeName>
    <alternativeName>
        <fullName evidence="1">UTP--ammonia ligase</fullName>
    </alternativeName>
</protein>
<keyword id="KW-0067">ATP-binding</keyword>
<keyword id="KW-0315">Glutamine amidotransferase</keyword>
<keyword id="KW-0436">Ligase</keyword>
<keyword id="KW-0460">Magnesium</keyword>
<keyword id="KW-0479">Metal-binding</keyword>
<keyword id="KW-0547">Nucleotide-binding</keyword>
<keyword id="KW-0665">Pyrimidine biosynthesis</keyword>
<keyword id="KW-1185">Reference proteome</keyword>